<keyword id="KW-0002">3D-structure</keyword>
<keyword id="KW-0276">Fatty acid metabolism</keyword>
<keyword id="KW-0443">Lipid metabolism</keyword>
<keyword id="KW-0456">Lyase</keyword>
<keyword id="KW-1185">Reference proteome</keyword>
<dbReference type="EC" id="4.2.1.116"/>
<dbReference type="EMBL" id="CP000682">
    <property type="protein sequence ID" value="ABP96141.1"/>
    <property type="molecule type" value="Genomic_DNA"/>
</dbReference>
<dbReference type="RefSeq" id="WP_012021928.1">
    <property type="nucleotide sequence ID" value="NZ_CP139956.1"/>
</dbReference>
<dbReference type="PDB" id="5ZAI">
    <property type="method" value="X-ray"/>
    <property type="resolution" value="1.80 A"/>
    <property type="chains" value="A/B/C/D/E/F=1-259"/>
</dbReference>
<dbReference type="PDBsum" id="5ZAI"/>
<dbReference type="SMR" id="A4YI89"/>
<dbReference type="STRING" id="399549.Msed_2001"/>
<dbReference type="KEGG" id="mse:Msed_2001"/>
<dbReference type="eggNOG" id="arCOG00249">
    <property type="taxonomic scope" value="Archaea"/>
</dbReference>
<dbReference type="HOGENOM" id="CLU_009834_7_6_2"/>
<dbReference type="BioCyc" id="MetaCyc:MONOMER-13729"/>
<dbReference type="BRENDA" id="4.2.1.116">
    <property type="organism ID" value="7245"/>
</dbReference>
<dbReference type="Proteomes" id="UP000000242">
    <property type="component" value="Chromosome"/>
</dbReference>
<dbReference type="GO" id="GO:0043956">
    <property type="term" value="F:3-hydroxypropionyl-CoA dehydratase activity"/>
    <property type="evidence" value="ECO:0000314"/>
    <property type="project" value="UniProtKB"/>
</dbReference>
<dbReference type="GO" id="GO:0006635">
    <property type="term" value="P:fatty acid beta-oxidation"/>
    <property type="evidence" value="ECO:0007669"/>
    <property type="project" value="TreeGrafter"/>
</dbReference>
<dbReference type="CDD" id="cd06558">
    <property type="entry name" value="crotonase-like"/>
    <property type="match status" value="1"/>
</dbReference>
<dbReference type="FunFam" id="3.90.226.10:FF:000009">
    <property type="entry name" value="Carnitinyl-CoA dehydratase"/>
    <property type="match status" value="1"/>
</dbReference>
<dbReference type="FunFam" id="1.10.12.10:FF:000001">
    <property type="entry name" value="Probable enoyl-CoA hydratase, mitochondrial"/>
    <property type="match status" value="1"/>
</dbReference>
<dbReference type="Gene3D" id="3.90.226.10">
    <property type="entry name" value="2-enoyl-CoA Hydratase, Chain A, domain 1"/>
    <property type="match status" value="1"/>
</dbReference>
<dbReference type="Gene3D" id="1.10.12.10">
    <property type="entry name" value="Lyase 2-enoyl-coa Hydratase, Chain A, domain 2"/>
    <property type="match status" value="1"/>
</dbReference>
<dbReference type="InterPro" id="IPR029045">
    <property type="entry name" value="ClpP/crotonase-like_dom_sf"/>
</dbReference>
<dbReference type="InterPro" id="IPR018376">
    <property type="entry name" value="Enoyl-CoA_hyd/isom_CS"/>
</dbReference>
<dbReference type="InterPro" id="IPR001753">
    <property type="entry name" value="Enoyl-CoA_hydra/iso"/>
</dbReference>
<dbReference type="InterPro" id="IPR014748">
    <property type="entry name" value="Enoyl-CoA_hydra_C"/>
</dbReference>
<dbReference type="PANTHER" id="PTHR11941:SF54">
    <property type="entry name" value="ENOYL-COA HYDRATASE, MITOCHONDRIAL"/>
    <property type="match status" value="1"/>
</dbReference>
<dbReference type="PANTHER" id="PTHR11941">
    <property type="entry name" value="ENOYL-COA HYDRATASE-RELATED"/>
    <property type="match status" value="1"/>
</dbReference>
<dbReference type="Pfam" id="PF00378">
    <property type="entry name" value="ECH_1"/>
    <property type="match status" value="1"/>
</dbReference>
<dbReference type="SUPFAM" id="SSF52096">
    <property type="entry name" value="ClpP/crotonase"/>
    <property type="match status" value="1"/>
</dbReference>
<dbReference type="PROSITE" id="PS00166">
    <property type="entry name" value="ENOYL_COA_HYDRATASE"/>
    <property type="match status" value="1"/>
</dbReference>
<proteinExistence type="evidence at protein level"/>
<protein>
    <recommendedName>
        <fullName evidence="4">3-hydroxypropionyl-coenzyme A dehydratase</fullName>
        <shortName evidence="4">3-hydroxypropionyl-CoA dehydratase</shortName>
        <ecNumber>4.2.1.116</ecNumber>
    </recommendedName>
</protein>
<accession>A4YI89</accession>
<organism>
    <name type="scientific">Metallosphaera sedula (strain ATCC 51363 / DSM 5348 / JCM 9185 / NBRC 15509 / TH2)</name>
    <dbReference type="NCBI Taxonomy" id="399549"/>
    <lineage>
        <taxon>Archaea</taxon>
        <taxon>Thermoproteota</taxon>
        <taxon>Thermoprotei</taxon>
        <taxon>Sulfolobales</taxon>
        <taxon>Sulfolobaceae</taxon>
        <taxon>Metallosphaera</taxon>
    </lineage>
</organism>
<evidence type="ECO:0000250" key="1">
    <source>
        <dbReference type="UniProtKB" id="Q5LLW6"/>
    </source>
</evidence>
<evidence type="ECO:0000255" key="2"/>
<evidence type="ECO:0000269" key="3">
    <source>
    </source>
</evidence>
<evidence type="ECO:0000303" key="4">
    <source>
    </source>
</evidence>
<evidence type="ECO:0000305" key="5"/>
<evidence type="ECO:0000312" key="6">
    <source>
        <dbReference type="EMBL" id="ABP96141.1"/>
    </source>
</evidence>
<evidence type="ECO:0007829" key="7">
    <source>
        <dbReference type="PDB" id="5ZAI"/>
    </source>
</evidence>
<reference evidence="5 6" key="1">
    <citation type="journal article" date="2008" name="Appl. Environ. Microbiol.">
        <title>The genome sequence of the metal-mobilizing, extremely thermoacidophilic archaeon Metallosphaera sedula provides insights into bioleaching-associated metabolism.</title>
        <authorList>
            <person name="Auernik K.S."/>
            <person name="Maezato Y."/>
            <person name="Blum P.H."/>
            <person name="Kelly R.M."/>
        </authorList>
    </citation>
    <scope>NUCLEOTIDE SEQUENCE [LARGE SCALE GENOMIC DNA]</scope>
    <source>
        <strain>ATCC 51363 / DSM 5348 / JCM 9185 / NBRC 15509 / TH2</strain>
    </source>
</reference>
<reference evidence="5" key="2">
    <citation type="journal article" date="2009" name="J. Bacteriol.">
        <title>3-hydroxypropionyl-coenzyme A dehydratase and acryloyl-coenzyme A reductase, enzymes of the autotrophic 3-hydroxypropionate/4-hydroxybutyrate cycle in the Sulfolobales.</title>
        <authorList>
            <person name="Teufel R."/>
            <person name="Kung J.W."/>
            <person name="Kockelkorn D."/>
            <person name="Alber B.E."/>
            <person name="Fuchs G."/>
        </authorList>
    </citation>
    <scope>IDENTIFICATION BY MASS SPECTROMETRY</scope>
    <scope>FUNCTION</scope>
    <scope>CATALYTIC ACTIVITY</scope>
    <scope>BIOPHYSICOCHEMICAL PROPERTIES</scope>
    <scope>SUBUNIT</scope>
</reference>
<gene>
    <name type="ordered locus">Msed_2001</name>
</gene>
<feature type="chain" id="PRO_0000404649" description="3-hydroxypropionyl-coenzyme A dehydratase">
    <location>
        <begin position="1"/>
        <end position="259"/>
    </location>
</feature>
<feature type="active site" description="Nucleophile" evidence="1">
    <location>
        <position position="113"/>
    </location>
</feature>
<feature type="active site" description="Proton acceptor" evidence="1">
    <location>
        <position position="133"/>
    </location>
</feature>
<feature type="strand" evidence="7">
    <location>
        <begin position="4"/>
        <end position="11"/>
    </location>
</feature>
<feature type="strand" evidence="7">
    <location>
        <begin position="14"/>
        <end position="19"/>
    </location>
</feature>
<feature type="helix" evidence="7">
    <location>
        <begin position="22"/>
        <end position="24"/>
    </location>
</feature>
<feature type="helix" evidence="7">
    <location>
        <begin position="30"/>
        <end position="45"/>
    </location>
</feature>
<feature type="strand" evidence="7">
    <location>
        <begin position="51"/>
        <end position="57"/>
    </location>
</feature>
<feature type="strand" evidence="7">
    <location>
        <begin position="60"/>
        <end position="62"/>
    </location>
</feature>
<feature type="helix" evidence="7">
    <location>
        <begin position="67"/>
        <end position="69"/>
    </location>
</feature>
<feature type="helix" evidence="7">
    <location>
        <begin position="75"/>
        <end position="93"/>
    </location>
</feature>
<feature type="strand" evidence="7">
    <location>
        <begin position="99"/>
        <end position="103"/>
    </location>
</feature>
<feature type="strand" evidence="7">
    <location>
        <begin position="105"/>
        <end position="108"/>
    </location>
</feature>
<feature type="helix" evidence="7">
    <location>
        <begin position="110"/>
        <end position="117"/>
    </location>
</feature>
<feature type="strand" evidence="7">
    <location>
        <begin position="118"/>
        <end position="124"/>
    </location>
</feature>
<feature type="strand" evidence="7">
    <location>
        <begin position="128"/>
        <end position="130"/>
    </location>
</feature>
<feature type="helix" evidence="7">
    <location>
        <begin position="132"/>
        <end position="136"/>
    </location>
</feature>
<feature type="helix" evidence="7">
    <location>
        <begin position="144"/>
        <end position="152"/>
    </location>
</feature>
<feature type="helix" evidence="7">
    <location>
        <begin position="154"/>
        <end position="163"/>
    </location>
</feature>
<feature type="helix" evidence="7">
    <location>
        <begin position="169"/>
        <end position="174"/>
    </location>
</feature>
<feature type="strand" evidence="7">
    <location>
        <begin position="177"/>
        <end position="182"/>
    </location>
</feature>
<feature type="helix" evidence="7">
    <location>
        <begin position="184"/>
        <end position="199"/>
    </location>
</feature>
<feature type="helix" evidence="7">
    <location>
        <begin position="203"/>
        <end position="217"/>
    </location>
</feature>
<feature type="helix" evidence="7">
    <location>
        <begin position="221"/>
        <end position="235"/>
    </location>
</feature>
<feature type="helix" evidence="7">
    <location>
        <begin position="239"/>
        <end position="249"/>
    </location>
</feature>
<name>HPCD_METS5</name>
<sequence length="259" mass="28316">MEFETIETKKEGNLFWITLNRPDKLNALNAKLLEELDRAVSQAESDPEIRVIIITGKGKAFCAGADITQFNQLTPAEAWKFSKKGREIMDKIEALSKPTIAMINGYALGGGLELALACDIRIAAEEAQLGLPEINLGIYPGYGGTQRLTRVIGKGRALEMMMTGDRIPGKDAEKYGLVNRVVPLANLEQETRKLAEKIAKKSPISLALIKEVVNRGLDSPLLSGLALESVGWGVVFSTEDKKEGVSAFLEKREPTFKGK</sequence>
<comment type="function">
    <text evidence="3">Plays a role in autotrophic carbon fixation via the 3-hydroxypropionate/4-hydroxybutyrate cycle. Catalyzes the reversible dehydration of 3-hydroxypropionyl-CoA to form acryloyl-CoA, and the reversible dehydration of (S)-3-hydroxybutyryl-CoA to form crotonyl-CoA. Inactive towards (R)-3-hydroxybutyryl-CoA.</text>
</comment>
<comment type="catalytic activity">
    <reaction evidence="3">
        <text>3-hydroxypropanoyl-CoA = acryloyl-CoA + H2O</text>
        <dbReference type="Rhea" id="RHEA:26518"/>
        <dbReference type="ChEBI" id="CHEBI:15377"/>
        <dbReference type="ChEBI" id="CHEBI:57367"/>
        <dbReference type="ChEBI" id="CHEBI:58528"/>
        <dbReference type="EC" id="4.2.1.116"/>
    </reaction>
</comment>
<comment type="biophysicochemical properties">
    <kinetics>
        <KM evidence="3">60 uM for 3-hydroxypropionyl-CoA</KM>
        <KM evidence="3">75 uM for (S)-3-hydroxybutyryl-CoA</KM>
    </kinetics>
    <phDependence>
        <text evidence="3">Optimum pH is 8.1 at room temperature. Retains half maximum activity at pH 6.5 and pH 9.5 at room temperature.</text>
    </phDependence>
</comment>
<comment type="subunit">
    <text evidence="3">Monomer.</text>
</comment>
<comment type="similarity">
    <text evidence="2">Belongs to the enoyl-CoA hydratase/isomerase family.</text>
</comment>